<organism>
    <name type="scientific">Buchnera aphidicola subsp. Cinara cedri (strain Cc)</name>
    <dbReference type="NCBI Taxonomy" id="372461"/>
    <lineage>
        <taxon>Bacteria</taxon>
        <taxon>Pseudomonadati</taxon>
        <taxon>Pseudomonadota</taxon>
        <taxon>Gammaproteobacteria</taxon>
        <taxon>Enterobacterales</taxon>
        <taxon>Erwiniaceae</taxon>
        <taxon>Buchnera</taxon>
    </lineage>
</organism>
<proteinExistence type="inferred from homology"/>
<accession>Q057H8</accession>
<keyword id="KW-0030">Aminoacyl-tRNA synthetase</keyword>
<keyword id="KW-0067">ATP-binding</keyword>
<keyword id="KW-0963">Cytoplasm</keyword>
<keyword id="KW-0436">Ligase</keyword>
<keyword id="KW-0479">Metal-binding</keyword>
<keyword id="KW-0547">Nucleotide-binding</keyword>
<keyword id="KW-0648">Protein biosynthesis</keyword>
<keyword id="KW-1185">Reference proteome</keyword>
<keyword id="KW-0694">RNA-binding</keyword>
<keyword id="KW-0820">tRNA-binding</keyword>
<keyword id="KW-0862">Zinc</keyword>
<gene>
    <name evidence="1" type="primary">alaS</name>
    <name type="ordered locus">BCc_254</name>
</gene>
<evidence type="ECO:0000255" key="1">
    <source>
        <dbReference type="HAMAP-Rule" id="MF_00036"/>
    </source>
</evidence>
<protein>
    <recommendedName>
        <fullName evidence="1">Alanine--tRNA ligase</fullName>
        <ecNumber evidence="1">6.1.1.7</ecNumber>
    </recommendedName>
    <alternativeName>
        <fullName evidence="1">Alanyl-tRNA synthetase</fullName>
        <shortName evidence="1">AlaRS</shortName>
    </alternativeName>
</protein>
<feature type="chain" id="PRO_0000347518" description="Alanine--tRNA ligase">
    <location>
        <begin position="1"/>
        <end position="881"/>
    </location>
</feature>
<feature type="binding site" evidence="1">
    <location>
        <position position="566"/>
    </location>
    <ligand>
        <name>Zn(2+)</name>
        <dbReference type="ChEBI" id="CHEBI:29105"/>
    </ligand>
</feature>
<feature type="binding site" evidence="1">
    <location>
        <position position="570"/>
    </location>
    <ligand>
        <name>Zn(2+)</name>
        <dbReference type="ChEBI" id="CHEBI:29105"/>
    </ligand>
</feature>
<feature type="binding site" evidence="1">
    <location>
        <position position="668"/>
    </location>
    <ligand>
        <name>Zn(2+)</name>
        <dbReference type="ChEBI" id="CHEBI:29105"/>
    </ligand>
</feature>
<feature type="binding site" evidence="1">
    <location>
        <position position="672"/>
    </location>
    <ligand>
        <name>Zn(2+)</name>
        <dbReference type="ChEBI" id="CHEBI:29105"/>
    </ligand>
</feature>
<reference key="1">
    <citation type="journal article" date="2006" name="Science">
        <title>A small microbial genome: the end of a long symbiotic relationship?</title>
        <authorList>
            <person name="Perez-Brocal V."/>
            <person name="Gil R."/>
            <person name="Ramos S."/>
            <person name="Lamelas A."/>
            <person name="Postigo M."/>
            <person name="Michelena J.M."/>
            <person name="Silva F.J."/>
            <person name="Moya A."/>
            <person name="Latorre A."/>
        </authorList>
    </citation>
    <scope>NUCLEOTIDE SEQUENCE [LARGE SCALE GENOMIC DNA]</scope>
    <source>
        <strain>Cc</strain>
    </source>
</reference>
<name>SYA_BUCCC</name>
<dbReference type="EC" id="6.1.1.7" evidence="1"/>
<dbReference type="EMBL" id="CP000263">
    <property type="protein sequence ID" value="ABJ90721.1"/>
    <property type="molecule type" value="Genomic_DNA"/>
</dbReference>
<dbReference type="RefSeq" id="WP_011672640.1">
    <property type="nucleotide sequence ID" value="NC_008513.1"/>
</dbReference>
<dbReference type="SMR" id="Q057H8"/>
<dbReference type="STRING" id="372461.BCc_254"/>
<dbReference type="KEGG" id="bcc:BCc_254"/>
<dbReference type="eggNOG" id="COG0013">
    <property type="taxonomic scope" value="Bacteria"/>
</dbReference>
<dbReference type="HOGENOM" id="CLU_004485_1_1_6"/>
<dbReference type="OrthoDB" id="9803884at2"/>
<dbReference type="Proteomes" id="UP000000669">
    <property type="component" value="Chromosome"/>
</dbReference>
<dbReference type="GO" id="GO:0005829">
    <property type="term" value="C:cytosol"/>
    <property type="evidence" value="ECO:0007669"/>
    <property type="project" value="TreeGrafter"/>
</dbReference>
<dbReference type="GO" id="GO:0004813">
    <property type="term" value="F:alanine-tRNA ligase activity"/>
    <property type="evidence" value="ECO:0007669"/>
    <property type="project" value="UniProtKB-UniRule"/>
</dbReference>
<dbReference type="GO" id="GO:0002161">
    <property type="term" value="F:aminoacyl-tRNA deacylase activity"/>
    <property type="evidence" value="ECO:0007669"/>
    <property type="project" value="TreeGrafter"/>
</dbReference>
<dbReference type="GO" id="GO:0005524">
    <property type="term" value="F:ATP binding"/>
    <property type="evidence" value="ECO:0007669"/>
    <property type="project" value="UniProtKB-UniRule"/>
</dbReference>
<dbReference type="GO" id="GO:0000049">
    <property type="term" value="F:tRNA binding"/>
    <property type="evidence" value="ECO:0007669"/>
    <property type="project" value="UniProtKB-KW"/>
</dbReference>
<dbReference type="GO" id="GO:0008270">
    <property type="term" value="F:zinc ion binding"/>
    <property type="evidence" value="ECO:0007669"/>
    <property type="project" value="UniProtKB-UniRule"/>
</dbReference>
<dbReference type="GO" id="GO:0006419">
    <property type="term" value="P:alanyl-tRNA aminoacylation"/>
    <property type="evidence" value="ECO:0007669"/>
    <property type="project" value="UniProtKB-UniRule"/>
</dbReference>
<dbReference type="CDD" id="cd00673">
    <property type="entry name" value="AlaRS_core"/>
    <property type="match status" value="1"/>
</dbReference>
<dbReference type="FunFam" id="3.30.930.10:FF:000004">
    <property type="entry name" value="Alanine--tRNA ligase"/>
    <property type="match status" value="1"/>
</dbReference>
<dbReference type="FunFam" id="3.30.980.10:FF:000004">
    <property type="entry name" value="Alanine--tRNA ligase, cytoplasmic"/>
    <property type="match status" value="1"/>
</dbReference>
<dbReference type="Gene3D" id="2.40.30.130">
    <property type="match status" value="1"/>
</dbReference>
<dbReference type="Gene3D" id="3.10.310.40">
    <property type="match status" value="1"/>
</dbReference>
<dbReference type="Gene3D" id="3.30.930.10">
    <property type="entry name" value="Bira Bifunctional Protein, Domain 2"/>
    <property type="match status" value="1"/>
</dbReference>
<dbReference type="Gene3D" id="3.30.980.10">
    <property type="entry name" value="Threonyl-trna Synthetase, Chain A, domain 2"/>
    <property type="match status" value="1"/>
</dbReference>
<dbReference type="HAMAP" id="MF_00036_B">
    <property type="entry name" value="Ala_tRNA_synth_B"/>
    <property type="match status" value="1"/>
</dbReference>
<dbReference type="InterPro" id="IPR045864">
    <property type="entry name" value="aa-tRNA-synth_II/BPL/LPL"/>
</dbReference>
<dbReference type="InterPro" id="IPR002318">
    <property type="entry name" value="Ala-tRNA-lgiase_IIc"/>
</dbReference>
<dbReference type="InterPro" id="IPR018162">
    <property type="entry name" value="Ala-tRNA-ligase_IIc_anticod-bd"/>
</dbReference>
<dbReference type="InterPro" id="IPR018165">
    <property type="entry name" value="Ala-tRNA-synth_IIc_core"/>
</dbReference>
<dbReference type="InterPro" id="IPR018164">
    <property type="entry name" value="Ala-tRNA-synth_IIc_N"/>
</dbReference>
<dbReference type="InterPro" id="IPR050058">
    <property type="entry name" value="Ala-tRNA_ligase"/>
</dbReference>
<dbReference type="InterPro" id="IPR023033">
    <property type="entry name" value="Ala_tRNA_ligase_euk/bac"/>
</dbReference>
<dbReference type="InterPro" id="IPR018163">
    <property type="entry name" value="Thr/Ala-tRNA-synth_IIc_edit"/>
</dbReference>
<dbReference type="InterPro" id="IPR009000">
    <property type="entry name" value="Transl_B-barrel_sf"/>
</dbReference>
<dbReference type="InterPro" id="IPR012947">
    <property type="entry name" value="tRNA_SAD"/>
</dbReference>
<dbReference type="NCBIfam" id="TIGR00344">
    <property type="entry name" value="alaS"/>
    <property type="match status" value="1"/>
</dbReference>
<dbReference type="PANTHER" id="PTHR11777:SF9">
    <property type="entry name" value="ALANINE--TRNA LIGASE, CYTOPLASMIC"/>
    <property type="match status" value="1"/>
</dbReference>
<dbReference type="PANTHER" id="PTHR11777">
    <property type="entry name" value="ALANYL-TRNA SYNTHETASE"/>
    <property type="match status" value="1"/>
</dbReference>
<dbReference type="Pfam" id="PF01411">
    <property type="entry name" value="tRNA-synt_2c"/>
    <property type="match status" value="1"/>
</dbReference>
<dbReference type="Pfam" id="PF07973">
    <property type="entry name" value="tRNA_SAD"/>
    <property type="match status" value="1"/>
</dbReference>
<dbReference type="PRINTS" id="PR00980">
    <property type="entry name" value="TRNASYNTHALA"/>
</dbReference>
<dbReference type="SMART" id="SM00863">
    <property type="entry name" value="tRNA_SAD"/>
    <property type="match status" value="1"/>
</dbReference>
<dbReference type="SUPFAM" id="SSF55681">
    <property type="entry name" value="Class II aaRS and biotin synthetases"/>
    <property type="match status" value="1"/>
</dbReference>
<dbReference type="SUPFAM" id="SSF101353">
    <property type="entry name" value="Putative anticodon-binding domain of alanyl-tRNA synthetase (AlaRS)"/>
    <property type="match status" value="1"/>
</dbReference>
<dbReference type="SUPFAM" id="SSF55186">
    <property type="entry name" value="ThrRS/AlaRS common domain"/>
    <property type="match status" value="1"/>
</dbReference>
<dbReference type="SUPFAM" id="SSF50447">
    <property type="entry name" value="Translation proteins"/>
    <property type="match status" value="1"/>
</dbReference>
<dbReference type="PROSITE" id="PS50860">
    <property type="entry name" value="AA_TRNA_LIGASE_II_ALA"/>
    <property type="match status" value="1"/>
</dbReference>
<comment type="function">
    <text evidence="1">Catalyzes the attachment of alanine to tRNA(Ala) in a two-step reaction: alanine is first activated by ATP to form Ala-AMP and then transferred to the acceptor end of tRNA(Ala). Also edits incorrectly charged Ser-tRNA(Ala) and Gly-tRNA(Ala) via its editing domain.</text>
</comment>
<comment type="catalytic activity">
    <reaction evidence="1">
        <text>tRNA(Ala) + L-alanine + ATP = L-alanyl-tRNA(Ala) + AMP + diphosphate</text>
        <dbReference type="Rhea" id="RHEA:12540"/>
        <dbReference type="Rhea" id="RHEA-COMP:9657"/>
        <dbReference type="Rhea" id="RHEA-COMP:9923"/>
        <dbReference type="ChEBI" id="CHEBI:30616"/>
        <dbReference type="ChEBI" id="CHEBI:33019"/>
        <dbReference type="ChEBI" id="CHEBI:57972"/>
        <dbReference type="ChEBI" id="CHEBI:78442"/>
        <dbReference type="ChEBI" id="CHEBI:78497"/>
        <dbReference type="ChEBI" id="CHEBI:456215"/>
        <dbReference type="EC" id="6.1.1.7"/>
    </reaction>
</comment>
<comment type="cofactor">
    <cofactor evidence="1">
        <name>Zn(2+)</name>
        <dbReference type="ChEBI" id="CHEBI:29105"/>
    </cofactor>
    <text evidence="1">Binds 1 zinc ion per subunit.</text>
</comment>
<comment type="subunit">
    <text evidence="1">Homotetramer.</text>
</comment>
<comment type="subcellular location">
    <subcellularLocation>
        <location evidence="1">Cytoplasm</location>
    </subcellularLocation>
</comment>
<comment type="domain">
    <text evidence="1">Consists of three domains; the N-terminal catalytic domain, the editing domain and the C-terminal C-Ala domain. The editing domain removes incorrectly charged amino acids, while the C-Ala domain, along with tRNA(Ala), serves as a bridge to cooperatively bring together the editing and aminoacylation centers thus stimulating deacylation of misacylated tRNAs.</text>
</comment>
<comment type="similarity">
    <text evidence="1">Belongs to the class-II aminoacyl-tRNA synthetase family.</text>
</comment>
<sequence length="881" mass="104147">MKTDKIRAMFLQFFKEKNHKIFKSSSLIPKDDNSLLFTNAGMNQFKKIYLKNKKKNQLSIATSQYCIRTGGKHDDLKKVGHTPYHHTLFEMLGNFSFGEYFKENAIKYAWEFLTHKKWLNLSKKKIWITYYYNDNETKKIWLNIIKIKNTHLIKIYDKKNIKYNSDNFWKMGDLGPCGPSTEIFYYQKKNRKEKKSIKSYKELEKYCLEIWNLVFMEFNQITKKKIIKLPIPSIDTGMGLERISVILQNVKSIFHTNNFIQLIEAIKKKIKIKIKKKNNVSLKIISDHIRTSTCLIAENILPGNEGRNYVLRKIIRRALCHGYFIGLQKPFFYKLSELIIYNMKKMNYDFHIQEKIHKIKKILFYEEKQFYYILENGLQKLKKIIKNIKKNKICEQKIFTLYDTYGLPIQITQKFCKKKNISFNINKLNLIIKNNKKKQKNKEKKKKNFSFITFKKKSIFDGYHIYEKKSKIIQIIYKNKNVLKLSKSQLGIIILDITPFFSKSSGQIGDSGKILNDKGIFIVQKTKKFDNYILHIGYIKHGCINIKDIVHAKINKKKRKTIQSNHSATHLLNAALCKIFSEKIIQKGSFINDKYLRFDFFCNKTLTEEKINYLENIINKKIQKNIPINFVITSFKKAKKKKIKFLLEKKYKKTVRIIYIKNFSIELCNGTHHDNTGKIGCFKIIAYNNIGNEIKRITAITGMEVIQYFNDKDKINKKLENLFSTNIHNIYLIAKNIVNKNKKLLEENIKLKNKNIIEISKILISKAYLSNKKFLIIEKTSYIEYKLLRKLSDILKEKLKSLIVILINDNNKKINFLISITKNLKHIINLNNIKNIIFSVIPGTGGGKKTIIEGKFNIDKIHLYKIDKIKKKIIKYINKYK</sequence>